<feature type="chain" id="PRO_1000149300" description="2-isopropylmalate synthase">
    <location>
        <begin position="1"/>
        <end position="525"/>
    </location>
</feature>
<feature type="domain" description="Pyruvate carboxyltransferase" evidence="1">
    <location>
        <begin position="5"/>
        <end position="267"/>
    </location>
</feature>
<feature type="region of interest" description="Regulatory domain" evidence="1">
    <location>
        <begin position="392"/>
        <end position="525"/>
    </location>
</feature>
<feature type="binding site" evidence="1">
    <location>
        <position position="14"/>
    </location>
    <ligand>
        <name>Mn(2+)</name>
        <dbReference type="ChEBI" id="CHEBI:29035"/>
    </ligand>
</feature>
<feature type="binding site" evidence="1">
    <location>
        <position position="202"/>
    </location>
    <ligand>
        <name>Mn(2+)</name>
        <dbReference type="ChEBI" id="CHEBI:29035"/>
    </ligand>
</feature>
<feature type="binding site" evidence="1">
    <location>
        <position position="204"/>
    </location>
    <ligand>
        <name>Mn(2+)</name>
        <dbReference type="ChEBI" id="CHEBI:29035"/>
    </ligand>
</feature>
<feature type="binding site" evidence="1">
    <location>
        <position position="238"/>
    </location>
    <ligand>
        <name>Mn(2+)</name>
        <dbReference type="ChEBI" id="CHEBI:29035"/>
    </ligand>
</feature>
<name>LEU1_SODGM</name>
<organism>
    <name type="scientific">Sodalis glossinidius (strain morsitans)</name>
    <dbReference type="NCBI Taxonomy" id="343509"/>
    <lineage>
        <taxon>Bacteria</taxon>
        <taxon>Pseudomonadati</taxon>
        <taxon>Pseudomonadota</taxon>
        <taxon>Gammaproteobacteria</taxon>
        <taxon>Enterobacterales</taxon>
        <taxon>Bruguierivoracaceae</taxon>
        <taxon>Sodalis</taxon>
    </lineage>
</organism>
<accession>Q2NVW3</accession>
<evidence type="ECO:0000255" key="1">
    <source>
        <dbReference type="HAMAP-Rule" id="MF_01025"/>
    </source>
</evidence>
<dbReference type="EC" id="2.3.3.13" evidence="1"/>
<dbReference type="EMBL" id="AP008232">
    <property type="protein sequence ID" value="BAE73712.1"/>
    <property type="molecule type" value="Genomic_DNA"/>
</dbReference>
<dbReference type="RefSeq" id="WP_011410410.1">
    <property type="nucleotide sequence ID" value="NC_007712.1"/>
</dbReference>
<dbReference type="SMR" id="Q2NVW3"/>
<dbReference type="STRING" id="343509.SG0437"/>
<dbReference type="KEGG" id="sgl:SG0437"/>
<dbReference type="eggNOG" id="COG0119">
    <property type="taxonomic scope" value="Bacteria"/>
</dbReference>
<dbReference type="HOGENOM" id="CLU_022158_0_1_6"/>
<dbReference type="OrthoDB" id="9803573at2"/>
<dbReference type="BioCyc" id="SGLO343509:SGP1_RS03950-MONOMER"/>
<dbReference type="UniPathway" id="UPA00048">
    <property type="reaction ID" value="UER00070"/>
</dbReference>
<dbReference type="Proteomes" id="UP000001932">
    <property type="component" value="Chromosome"/>
</dbReference>
<dbReference type="GO" id="GO:0005829">
    <property type="term" value="C:cytosol"/>
    <property type="evidence" value="ECO:0007669"/>
    <property type="project" value="TreeGrafter"/>
</dbReference>
<dbReference type="GO" id="GO:0003852">
    <property type="term" value="F:2-isopropylmalate synthase activity"/>
    <property type="evidence" value="ECO:0007669"/>
    <property type="project" value="UniProtKB-UniRule"/>
</dbReference>
<dbReference type="GO" id="GO:0003985">
    <property type="term" value="F:acetyl-CoA C-acetyltransferase activity"/>
    <property type="evidence" value="ECO:0007669"/>
    <property type="project" value="UniProtKB-UniRule"/>
</dbReference>
<dbReference type="GO" id="GO:0030145">
    <property type="term" value="F:manganese ion binding"/>
    <property type="evidence" value="ECO:0007669"/>
    <property type="project" value="UniProtKB-UniRule"/>
</dbReference>
<dbReference type="GO" id="GO:0009098">
    <property type="term" value="P:L-leucine biosynthetic process"/>
    <property type="evidence" value="ECO:0007669"/>
    <property type="project" value="UniProtKB-UniRule"/>
</dbReference>
<dbReference type="CDD" id="cd07940">
    <property type="entry name" value="DRE_TIM_IPMS"/>
    <property type="match status" value="1"/>
</dbReference>
<dbReference type="FunFam" id="1.10.238.260:FF:000001">
    <property type="entry name" value="2-isopropylmalate synthase"/>
    <property type="match status" value="1"/>
</dbReference>
<dbReference type="FunFam" id="3.20.20.70:FF:000010">
    <property type="entry name" value="2-isopropylmalate synthase"/>
    <property type="match status" value="1"/>
</dbReference>
<dbReference type="FunFam" id="3.30.160.270:FF:000001">
    <property type="entry name" value="2-isopropylmalate synthase"/>
    <property type="match status" value="1"/>
</dbReference>
<dbReference type="Gene3D" id="1.10.238.260">
    <property type="match status" value="1"/>
</dbReference>
<dbReference type="Gene3D" id="3.30.160.270">
    <property type="match status" value="1"/>
</dbReference>
<dbReference type="Gene3D" id="3.20.20.70">
    <property type="entry name" value="Aldolase class I"/>
    <property type="match status" value="1"/>
</dbReference>
<dbReference type="HAMAP" id="MF_01025">
    <property type="entry name" value="LeuA_type1"/>
    <property type="match status" value="1"/>
</dbReference>
<dbReference type="InterPro" id="IPR050073">
    <property type="entry name" value="2-IPM_HCS-like"/>
</dbReference>
<dbReference type="InterPro" id="IPR013709">
    <property type="entry name" value="2-isopropylmalate_synth_dimer"/>
</dbReference>
<dbReference type="InterPro" id="IPR002034">
    <property type="entry name" value="AIPM/Hcit_synth_CS"/>
</dbReference>
<dbReference type="InterPro" id="IPR013785">
    <property type="entry name" value="Aldolase_TIM"/>
</dbReference>
<dbReference type="InterPro" id="IPR054691">
    <property type="entry name" value="LeuA/HCS_post-cat"/>
</dbReference>
<dbReference type="InterPro" id="IPR036230">
    <property type="entry name" value="LeuA_allosteric_dom_sf"/>
</dbReference>
<dbReference type="InterPro" id="IPR005671">
    <property type="entry name" value="LeuA_bact_synth"/>
</dbReference>
<dbReference type="InterPro" id="IPR000891">
    <property type="entry name" value="PYR_CT"/>
</dbReference>
<dbReference type="NCBIfam" id="TIGR00973">
    <property type="entry name" value="leuA_bact"/>
    <property type="match status" value="1"/>
</dbReference>
<dbReference type="NCBIfam" id="NF002084">
    <property type="entry name" value="PRK00915.1-1"/>
    <property type="match status" value="1"/>
</dbReference>
<dbReference type="NCBIfam" id="NF002086">
    <property type="entry name" value="PRK00915.1-3"/>
    <property type="match status" value="1"/>
</dbReference>
<dbReference type="PANTHER" id="PTHR10277:SF9">
    <property type="entry name" value="2-ISOPROPYLMALATE SYNTHASE 1, CHLOROPLASTIC-RELATED"/>
    <property type="match status" value="1"/>
</dbReference>
<dbReference type="PANTHER" id="PTHR10277">
    <property type="entry name" value="HOMOCITRATE SYNTHASE-RELATED"/>
    <property type="match status" value="1"/>
</dbReference>
<dbReference type="Pfam" id="PF22617">
    <property type="entry name" value="HCS_D2"/>
    <property type="match status" value="1"/>
</dbReference>
<dbReference type="Pfam" id="PF00682">
    <property type="entry name" value="HMGL-like"/>
    <property type="match status" value="1"/>
</dbReference>
<dbReference type="Pfam" id="PF08502">
    <property type="entry name" value="LeuA_dimer"/>
    <property type="match status" value="1"/>
</dbReference>
<dbReference type="SMART" id="SM00917">
    <property type="entry name" value="LeuA_dimer"/>
    <property type="match status" value="1"/>
</dbReference>
<dbReference type="SUPFAM" id="SSF110921">
    <property type="entry name" value="2-isopropylmalate synthase LeuA, allosteric (dimerisation) domain"/>
    <property type="match status" value="1"/>
</dbReference>
<dbReference type="SUPFAM" id="SSF51569">
    <property type="entry name" value="Aldolase"/>
    <property type="match status" value="1"/>
</dbReference>
<dbReference type="PROSITE" id="PS00815">
    <property type="entry name" value="AIPM_HOMOCIT_SYNTH_1"/>
    <property type="match status" value="1"/>
</dbReference>
<dbReference type="PROSITE" id="PS00816">
    <property type="entry name" value="AIPM_HOMOCIT_SYNTH_2"/>
    <property type="match status" value="1"/>
</dbReference>
<dbReference type="PROSITE" id="PS50991">
    <property type="entry name" value="PYR_CT"/>
    <property type="match status" value="1"/>
</dbReference>
<reference key="1">
    <citation type="journal article" date="2006" name="Genome Res.">
        <title>Massive genome erosion and functional adaptations provide insights into the symbiotic lifestyle of Sodalis glossinidius in the tsetse host.</title>
        <authorList>
            <person name="Toh H."/>
            <person name="Weiss B.L."/>
            <person name="Perkin S.A.H."/>
            <person name="Yamashita A."/>
            <person name="Oshima K."/>
            <person name="Hattori M."/>
            <person name="Aksoy S."/>
        </authorList>
    </citation>
    <scope>NUCLEOTIDE SEQUENCE [LARGE SCALE GENOMIC DNA]</scope>
    <source>
        <strain>morsitans</strain>
    </source>
</reference>
<keyword id="KW-0028">Amino-acid biosynthesis</keyword>
<keyword id="KW-0100">Branched-chain amino acid biosynthesis</keyword>
<keyword id="KW-0963">Cytoplasm</keyword>
<keyword id="KW-0432">Leucine biosynthesis</keyword>
<keyword id="KW-0464">Manganese</keyword>
<keyword id="KW-0479">Metal-binding</keyword>
<keyword id="KW-0808">Transferase</keyword>
<sequence>MSQQVIIFDTTLRDGEQALQASLSVKEKLQVAQALERMGVDVMEVGFPVSSPGDFESVQTIARQIKNSRVCGLARCVDRDIDVAAEALRVAEAFRIHLFLATSTLHVESKLKKSFDQVVEMAVHSVKRARNYTDDVEFSCEDAGRTPIDNLCRIVEATIKAGARTINIPDTVGYTTPNQFGGIISSLYQHVPNIDKAIISVHCHDDLGMAVGNSIAAIQSGARQVEGTLNGIGERAGNTALEEVIMAIKVRQDLLNVHTGIHHQEIYRTSQVVSQLCNMPIPANKAVVGANAFAHSSGIHQDGVLKNRQNYEIMTPEIIGLKEVQLNLTSRSGRAAVKHRMQEMGYQESNYSLDELYDAFLKLADKKGQVFDYDLEALAFINNQQEQSEHFRLEYFSVQSSSADIATASVKLAFGDEVHAEAATGNGPVDAVYEALNRITQLPIQLEKYQLTAKGHGRDALGQVDIVVEYEGRRFHGVGLATDIIESSALAMVNSMNTIWRARQVGIELRRLHQHNNSQDMQETV</sequence>
<comment type="function">
    <text evidence="1">Catalyzes the condensation of the acetyl group of acetyl-CoA with 3-methyl-2-oxobutanoate (2-ketoisovalerate) to form 3-carboxy-3-hydroxy-4-methylpentanoate (2-isopropylmalate).</text>
</comment>
<comment type="catalytic activity">
    <reaction evidence="1">
        <text>3-methyl-2-oxobutanoate + acetyl-CoA + H2O = (2S)-2-isopropylmalate + CoA + H(+)</text>
        <dbReference type="Rhea" id="RHEA:21524"/>
        <dbReference type="ChEBI" id="CHEBI:1178"/>
        <dbReference type="ChEBI" id="CHEBI:11851"/>
        <dbReference type="ChEBI" id="CHEBI:15377"/>
        <dbReference type="ChEBI" id="CHEBI:15378"/>
        <dbReference type="ChEBI" id="CHEBI:57287"/>
        <dbReference type="ChEBI" id="CHEBI:57288"/>
        <dbReference type="EC" id="2.3.3.13"/>
    </reaction>
</comment>
<comment type="cofactor">
    <cofactor evidence="1">
        <name>Mn(2+)</name>
        <dbReference type="ChEBI" id="CHEBI:29035"/>
    </cofactor>
</comment>
<comment type="pathway">
    <text evidence="1">Amino-acid biosynthesis; L-leucine biosynthesis; L-leucine from 3-methyl-2-oxobutanoate: step 1/4.</text>
</comment>
<comment type="subunit">
    <text evidence="1">Homodimer.</text>
</comment>
<comment type="subcellular location">
    <subcellularLocation>
        <location evidence="1">Cytoplasm</location>
    </subcellularLocation>
</comment>
<comment type="similarity">
    <text evidence="1">Belongs to the alpha-IPM synthase/homocitrate synthase family. LeuA type 1 subfamily.</text>
</comment>
<gene>
    <name evidence="1" type="primary">leuA</name>
    <name type="ordered locus">SG0437</name>
</gene>
<protein>
    <recommendedName>
        <fullName evidence="1">2-isopropylmalate synthase</fullName>
        <ecNumber evidence="1">2.3.3.13</ecNumber>
    </recommendedName>
    <alternativeName>
        <fullName evidence="1">Alpha-IPM synthase</fullName>
    </alternativeName>
    <alternativeName>
        <fullName evidence="1">Alpha-isopropylmalate synthase</fullName>
    </alternativeName>
</protein>
<proteinExistence type="inferred from homology"/>